<organism>
    <name type="scientific">Mus musculus</name>
    <name type="common">Mouse</name>
    <dbReference type="NCBI Taxonomy" id="10090"/>
    <lineage>
        <taxon>Eukaryota</taxon>
        <taxon>Metazoa</taxon>
        <taxon>Chordata</taxon>
        <taxon>Craniata</taxon>
        <taxon>Vertebrata</taxon>
        <taxon>Euteleostomi</taxon>
        <taxon>Mammalia</taxon>
        <taxon>Eutheria</taxon>
        <taxon>Euarchontoglires</taxon>
        <taxon>Glires</taxon>
        <taxon>Rodentia</taxon>
        <taxon>Myomorpha</taxon>
        <taxon>Muroidea</taxon>
        <taxon>Muridae</taxon>
        <taxon>Murinae</taxon>
        <taxon>Mus</taxon>
        <taxon>Mus</taxon>
    </lineage>
</organism>
<proteinExistence type="evidence at protein level"/>
<comment type="function">
    <text evidence="1 2 3">Subunit of the V1 complex of vacuolar(H+)-ATPase (V-ATPase), a multisubunit enzyme composed of a peripheral complex (V1) that hydrolyzes ATP and a membrane integral complex (V0) that translocates protons (By similarity). V-ATPase is responsible for acidifying and maintaining the pH of intracellular compartments and in some cell types, is targeted to the plasma membrane, where it is responsible for acidifying the extracellular environment (By similarity). Subunit C is necessary for the assembly of the catalytic sector of the enzyme and is likely to have a specific function in its catalytic activity (By similarity).</text>
</comment>
<comment type="subunit">
    <text evidence="2">V-ATPase is a heteromultimeric enzyme made up of two complexes: the ATP-hydrolytic V1 complex and the proton translocation V0 complex. The V1 complex consists of three catalytic AB heterodimers that form a heterohexamer, three peripheral stalks each consisting of EG heterodimers, one central rotor including subunits D and F, and the regulatory subunits C and H. The proton translocation complex V0 consists of the proton transport subunit a, a ring of proteolipid subunits c9c'', rotary subunit d, subunits e and f, and the accessory subunits ATP6AP1/Ac45 and ATP6AP2/PRR.</text>
</comment>
<comment type="alternative products">
    <event type="alternative splicing"/>
    <isoform>
        <id>Q99L60-1</id>
        <name>1</name>
        <name>C2-a</name>
        <sequence type="displayed"/>
    </isoform>
    <isoform>
        <id>Q99L60-2</id>
        <name>2</name>
        <sequence type="described" ref="VSP_024884"/>
    </isoform>
    <isoform>
        <id>Q99L60-3</id>
        <name>3</name>
        <name>C2-b</name>
        <sequence type="described" ref="VSP_024885"/>
    </isoform>
</comment>
<comment type="tissue specificity">
    <text evidence="5 6">Predominantly expressed in the lung and kidney. Isoform 1 is lung-specific while isoform 3 is a kidney-specific isoform. Isoform 1 is localized in the lamellar bodies of type II alveolar cells. Isoform 2 is strongly expressed in the cortical and medulla collecting ducts and is found in the plasma membranes of renal alpha and beta intercalated cells.</text>
</comment>
<comment type="developmental stage">
    <text evidence="5">Significant expression seen at 17 dpc and not earlier.</text>
</comment>
<comment type="similarity">
    <text evidence="10">Belongs to the V-ATPase C subunit family.</text>
</comment>
<dbReference type="EMBL" id="AB088357">
    <property type="protein sequence ID" value="BAC57950.1"/>
    <property type="molecule type" value="mRNA"/>
</dbReference>
<dbReference type="EMBL" id="BC003810">
    <property type="protein sequence ID" value="AAH03810.1"/>
    <property type="molecule type" value="mRNA"/>
</dbReference>
<dbReference type="EMBL" id="BC056636">
    <property type="protein sequence ID" value="AAH56636.1"/>
    <property type="molecule type" value="mRNA"/>
</dbReference>
<dbReference type="CCDS" id="CCDS25827.1">
    <molecule id="Q99L60-1"/>
</dbReference>
<dbReference type="CCDS" id="CCDS49034.1">
    <molecule id="Q99L60-2"/>
</dbReference>
<dbReference type="RefSeq" id="NP_001153104.1">
    <molecule id="Q99L60-2"/>
    <property type="nucleotide sequence ID" value="NM_001159632.1"/>
</dbReference>
<dbReference type="RefSeq" id="NP_598460.1">
    <molecule id="Q99L60-1"/>
    <property type="nucleotide sequence ID" value="NM_133699.2"/>
</dbReference>
<dbReference type="RefSeq" id="XP_006515259.1">
    <molecule id="Q99L60-2"/>
    <property type="nucleotide sequence ID" value="XM_006515196.4"/>
</dbReference>
<dbReference type="RefSeq" id="XP_006515262.1">
    <molecule id="Q99L60-3"/>
    <property type="nucleotide sequence ID" value="XM_006515199.4"/>
</dbReference>
<dbReference type="SMR" id="Q99L60"/>
<dbReference type="BioGRID" id="213044">
    <property type="interactions" value="1"/>
</dbReference>
<dbReference type="FunCoup" id="Q99L60">
    <property type="interactions" value="457"/>
</dbReference>
<dbReference type="STRING" id="10090.ENSMUSP00000020884"/>
<dbReference type="TCDB" id="3.A.2.2.6">
    <property type="family name" value="the h+- or na+-translocating f-type, v-type and a-type atpase (f-atpase) superfamily"/>
</dbReference>
<dbReference type="GlyGen" id="Q99L60">
    <property type="glycosylation" value="1 site, 1 O-linked glycan (1 site)"/>
</dbReference>
<dbReference type="iPTMnet" id="Q99L60"/>
<dbReference type="PhosphoSitePlus" id="Q99L60"/>
<dbReference type="jPOST" id="Q99L60"/>
<dbReference type="PaxDb" id="10090-ENSMUSP00000020884"/>
<dbReference type="ProteomicsDB" id="297536">
    <molecule id="Q99L60-1"/>
</dbReference>
<dbReference type="ProteomicsDB" id="297537">
    <molecule id="Q99L60-2"/>
</dbReference>
<dbReference type="ProteomicsDB" id="297538">
    <molecule id="Q99L60-3"/>
</dbReference>
<dbReference type="Antibodypedia" id="26729">
    <property type="antibodies" value="319 antibodies from 30 providers"/>
</dbReference>
<dbReference type="DNASU" id="68775"/>
<dbReference type="Ensembl" id="ENSMUST00000020884.16">
    <molecule id="Q99L60-2"/>
    <property type="protein sequence ID" value="ENSMUSP00000020884.10"/>
    <property type="gene ID" value="ENSMUSG00000020566.20"/>
</dbReference>
<dbReference type="Ensembl" id="ENSMUST00000095820.12">
    <molecule id="Q99L60-1"/>
    <property type="protein sequence ID" value="ENSMUSP00000093500.6"/>
    <property type="gene ID" value="ENSMUSG00000020566.20"/>
</dbReference>
<dbReference type="Ensembl" id="ENSMUST00000221129.2">
    <molecule id="Q99L60-3"/>
    <property type="protein sequence ID" value="ENSMUSP00000152515.2"/>
    <property type="gene ID" value="ENSMUSG00000020566.20"/>
</dbReference>
<dbReference type="GeneID" id="68775"/>
<dbReference type="KEGG" id="mmu:68775"/>
<dbReference type="UCSC" id="uc007ncq.1">
    <molecule id="Q99L60-1"/>
    <property type="organism name" value="mouse"/>
</dbReference>
<dbReference type="UCSC" id="uc007ncs.2">
    <molecule id="Q99L60-2"/>
    <property type="organism name" value="mouse"/>
</dbReference>
<dbReference type="AGR" id="MGI:1916025"/>
<dbReference type="CTD" id="245973"/>
<dbReference type="MGI" id="MGI:1916025">
    <property type="gene designation" value="Atp6v1c2"/>
</dbReference>
<dbReference type="VEuPathDB" id="HostDB:ENSMUSG00000020566"/>
<dbReference type="eggNOG" id="KOG2909">
    <property type="taxonomic scope" value="Eukaryota"/>
</dbReference>
<dbReference type="GeneTree" id="ENSGT00390000004263"/>
<dbReference type="InParanoid" id="Q99L60"/>
<dbReference type="OMA" id="KSSYIQW"/>
<dbReference type="OrthoDB" id="24465at9989"/>
<dbReference type="PhylomeDB" id="Q99L60"/>
<dbReference type="TreeFam" id="TF314912"/>
<dbReference type="Reactome" id="R-MMU-1222556">
    <property type="pathway name" value="ROS and RNS production in phagocytes"/>
</dbReference>
<dbReference type="Reactome" id="R-MMU-77387">
    <property type="pathway name" value="Insulin receptor recycling"/>
</dbReference>
<dbReference type="Reactome" id="R-MMU-917977">
    <property type="pathway name" value="Transferrin endocytosis and recycling"/>
</dbReference>
<dbReference type="Reactome" id="R-MMU-9639288">
    <property type="pathway name" value="Amino acids regulate mTORC1"/>
</dbReference>
<dbReference type="Reactome" id="R-MMU-983712">
    <property type="pathway name" value="Ion channel transport"/>
</dbReference>
<dbReference type="BioGRID-ORCS" id="68775">
    <property type="hits" value="2 hits in 79 CRISPR screens"/>
</dbReference>
<dbReference type="ChiTaRS" id="Atp6v1c2">
    <property type="organism name" value="mouse"/>
</dbReference>
<dbReference type="PRO" id="PR:Q99L60"/>
<dbReference type="Proteomes" id="UP000000589">
    <property type="component" value="Chromosome 12"/>
</dbReference>
<dbReference type="RNAct" id="Q99L60">
    <property type="molecule type" value="protein"/>
</dbReference>
<dbReference type="Bgee" id="ENSMUSG00000020566">
    <property type="expression patterns" value="Expressed in prostate gland ventral lobe and 64 other cell types or tissues"/>
</dbReference>
<dbReference type="ExpressionAtlas" id="Q99L60">
    <property type="expression patterns" value="baseline and differential"/>
</dbReference>
<dbReference type="GO" id="GO:0033180">
    <property type="term" value="C:proton-transporting V-type ATPase, V1 domain"/>
    <property type="evidence" value="ECO:0007669"/>
    <property type="project" value="InterPro"/>
</dbReference>
<dbReference type="GO" id="GO:0042802">
    <property type="term" value="F:identical protein binding"/>
    <property type="evidence" value="ECO:0007669"/>
    <property type="project" value="Ensembl"/>
</dbReference>
<dbReference type="GO" id="GO:0046961">
    <property type="term" value="F:proton-transporting ATPase activity, rotational mechanism"/>
    <property type="evidence" value="ECO:0000314"/>
    <property type="project" value="MGI"/>
</dbReference>
<dbReference type="GO" id="GO:0030177">
    <property type="term" value="P:positive regulation of Wnt signaling pathway"/>
    <property type="evidence" value="ECO:0007669"/>
    <property type="project" value="Ensembl"/>
</dbReference>
<dbReference type="CDD" id="cd14785">
    <property type="entry name" value="V-ATPase_C"/>
    <property type="match status" value="1"/>
</dbReference>
<dbReference type="FunFam" id="1.20.1460.10:FF:000004">
    <property type="entry name" value="V-type proton ATPase subunit C"/>
    <property type="match status" value="1"/>
</dbReference>
<dbReference type="FunFam" id="1.20.1460.10:FF:000005">
    <property type="entry name" value="V-type proton ATPase subunit C"/>
    <property type="match status" value="1"/>
</dbReference>
<dbReference type="FunFam" id="3.30.70.100:FF:000002">
    <property type="entry name" value="V-type proton ATPase subunit C"/>
    <property type="match status" value="1"/>
</dbReference>
<dbReference type="Gene3D" id="3.30.70.100">
    <property type="match status" value="1"/>
</dbReference>
<dbReference type="Gene3D" id="1.20.1460.10">
    <property type="entry name" value="subunit c (vma5p) of the yeast v-atpase, domain 2"/>
    <property type="match status" value="1"/>
</dbReference>
<dbReference type="InterPro" id="IPR004907">
    <property type="entry name" value="ATPase_V1-cplx_csu"/>
</dbReference>
<dbReference type="InterPro" id="IPR036132">
    <property type="entry name" value="Vac_ATP_synth_c_sf"/>
</dbReference>
<dbReference type="PANTHER" id="PTHR10137">
    <property type="entry name" value="V-TYPE PROTON ATPASE SUBUNIT C"/>
    <property type="match status" value="1"/>
</dbReference>
<dbReference type="PANTHER" id="PTHR10137:SF4">
    <property type="entry name" value="V-TYPE PROTON ATPASE SUBUNIT C 2"/>
    <property type="match status" value="1"/>
</dbReference>
<dbReference type="Pfam" id="PF03223">
    <property type="entry name" value="V-ATPase_C"/>
    <property type="match status" value="1"/>
</dbReference>
<dbReference type="SUPFAM" id="SSF118203">
    <property type="entry name" value="Vacuolar ATP synthase subunit C"/>
    <property type="match status" value="2"/>
</dbReference>
<reference key="1">
    <citation type="journal article" date="2003" name="Gene">
        <title>Diversity of mouse proton-translocating ATPase: presence of multiple isoforms of the C, d and G subunits.</title>
        <authorList>
            <person name="Sun-Wada G.-H."/>
            <person name="Yoshimizu T."/>
            <person name="Imai-Senga Y."/>
            <person name="Wada Y."/>
            <person name="Futai M."/>
        </authorList>
    </citation>
    <scope>NUCLEOTIDE SEQUENCE [MRNA] (ISOFORMS 1 AND 3)</scope>
    <scope>DEVELOPMENTAL STAGE</scope>
    <scope>TISSUE SPECIFICITY</scope>
</reference>
<reference key="2">
    <citation type="journal article" date="2003" name="J. Biol. Chem.">
        <title>Mouse proton pump ATPase C subunit isoforms (C2-a and C2-b) specifically expressed in kidney and lung.</title>
        <authorList>
            <person name="Sun-Wada G.H."/>
            <person name="Murata Y."/>
            <person name="Namba M."/>
            <person name="Yamamoto A."/>
            <person name="Wada Y."/>
            <person name="Futai M."/>
        </authorList>
    </citation>
    <scope>NUCLEOTIDE SEQUENCE [MRNA] (ISOFORMS 1 AND 3)</scope>
    <scope>TISSUE SPECIFICITY</scope>
</reference>
<reference key="3">
    <citation type="journal article" date="2004" name="Genome Res.">
        <title>The status, quality, and expansion of the NIH full-length cDNA project: the Mammalian Gene Collection (MGC).</title>
        <authorList>
            <consortium name="The MGC Project Team"/>
        </authorList>
    </citation>
    <scope>NUCLEOTIDE SEQUENCE [LARGE SCALE MRNA] (ISOFORMS 1 AND 2)</scope>
    <source>
        <strain>Czech II</strain>
        <tissue>Mammary tumor</tissue>
    </source>
</reference>
<reference key="4">
    <citation type="journal article" date="2010" name="Cell">
        <title>A tissue-specific atlas of mouse protein phosphorylation and expression.</title>
        <authorList>
            <person name="Huttlin E.L."/>
            <person name="Jedrychowski M.P."/>
            <person name="Elias J.E."/>
            <person name="Goswami T."/>
            <person name="Rad R."/>
            <person name="Beausoleil S.A."/>
            <person name="Villen J."/>
            <person name="Haas W."/>
            <person name="Sowa M.E."/>
            <person name="Gygi S.P."/>
        </authorList>
    </citation>
    <scope>IDENTIFICATION BY MASS SPECTROMETRY [LARGE SCALE ANALYSIS]</scope>
    <source>
        <tissue>Kidney</tissue>
    </source>
</reference>
<evidence type="ECO:0000250" key="1">
    <source>
        <dbReference type="UniProtKB" id="P21282"/>
    </source>
</evidence>
<evidence type="ECO:0000250" key="2">
    <source>
        <dbReference type="UniProtKB" id="P21283"/>
    </source>
</evidence>
<evidence type="ECO:0000250" key="3">
    <source>
        <dbReference type="UniProtKB" id="P31412"/>
    </source>
</evidence>
<evidence type="ECO:0000256" key="4">
    <source>
        <dbReference type="SAM" id="MobiDB-lite"/>
    </source>
</evidence>
<evidence type="ECO:0000269" key="5">
    <source>
    </source>
</evidence>
<evidence type="ECO:0000269" key="6">
    <source>
    </source>
</evidence>
<evidence type="ECO:0000303" key="7">
    <source>
    </source>
</evidence>
<evidence type="ECO:0000303" key="8">
    <source>
    </source>
</evidence>
<evidence type="ECO:0000303" key="9">
    <source>
    </source>
</evidence>
<evidence type="ECO:0000305" key="10"/>
<keyword id="KW-0025">Alternative splicing</keyword>
<keyword id="KW-0375">Hydrogen ion transport</keyword>
<keyword id="KW-0406">Ion transport</keyword>
<keyword id="KW-1185">Reference proteome</keyword>
<keyword id="KW-0813">Transport</keyword>
<protein>
    <recommendedName>
        <fullName>V-type proton ATPase subunit C 2</fullName>
        <shortName>V-ATPase subunit C 2</shortName>
    </recommendedName>
    <alternativeName>
        <fullName>Vacuolar proton pump subunit C 2</fullName>
    </alternativeName>
</protein>
<feature type="chain" id="PRO_0000285670" description="V-type proton ATPase subunit C 2">
    <location>
        <begin position="1"/>
        <end position="427"/>
    </location>
</feature>
<feature type="region of interest" description="Disordered" evidence="4">
    <location>
        <begin position="298"/>
        <end position="320"/>
    </location>
</feature>
<feature type="splice variant" id="VSP_024884" description="In isoform 2." evidence="9">
    <original>V</original>
    <variation>GLKEKMKCLKI</variation>
    <location>
        <position position="95"/>
    </location>
</feature>
<feature type="splice variant" id="VSP_024885" description="In isoform 3." evidence="7 8">
    <location>
        <begin position="276"/>
        <end position="321"/>
    </location>
</feature>
<feature type="sequence conflict" description="In Ref. 3; AAH56636." evidence="10" ref="3">
    <original>A</original>
    <variation>T</variation>
    <location>
        <position position="125"/>
    </location>
</feature>
<accession>Q99L60</accession>
<accession>Q6PHA4</accession>
<sequence length="427" mass="48350">MSEFWLISAPGDKENLQALERMNNVTSKSNLSHNTKFAIPDFKVGTLDSLVGLSDELGKLDTFAESLIKRMAQSVVEVMEDSKGKAHETLLANGVDLTSFVTHFEWDMAKYPAKQPLVSVVDTLAKQLAQIETDLKSRTAAYSVLKANLENLEKRSTGNLFTRTLSDIVSKEDFVLDSEYLITLLVIVPKSSFAQWQKTYESLSDMVVPRSTKLIAEDNEGGLFTVTLFRKVIEDFKVKAKENKFIVREFYYDEKEIKREREEMTRLLSDKKQQYPTSCVALKKGSATYRDHKVKVAPLGNPARPAAGQTDRDRESEGEGEGPLLRWLKVNFSEAFIAWIHIKALRVFVESVLRYGLPVNFQAVLLQPHKKSATKRLREVLNSVFRHLDEVAAASILDASVEIPGLQLSNQDYFPYVYFHIDLSLLD</sequence>
<name>VATC2_MOUSE</name>
<gene>
    <name type="primary">Atp6v1c2</name>
    <name type="synonym">Atp6c2</name>
</gene>